<keyword id="KW-0418">Kinase</keyword>
<keyword id="KW-1185">Reference proteome</keyword>
<keyword id="KW-0808">Transferase</keyword>
<comment type="function">
    <text evidence="2">Catalyzes the conversion of 2-epi-5-epi-valiolone to 2-epi-5-epi-valiolone 7-phosphate. Involved in the biosynthesis of the acarviose moiety of the alpha-glucosidase inhibitor acarbose.</text>
</comment>
<comment type="catalytic activity">
    <reaction evidence="2">
        <text>2-epi-5-epi-valiolone + ATP = 2-epi-5-epi-valiolone 7-phosphate + ADP + H(+)</text>
        <dbReference type="Rhea" id="RHEA:44364"/>
        <dbReference type="ChEBI" id="CHEBI:15378"/>
        <dbReference type="ChEBI" id="CHEBI:30616"/>
        <dbReference type="ChEBI" id="CHEBI:84187"/>
        <dbReference type="ChEBI" id="CHEBI:84362"/>
        <dbReference type="ChEBI" id="CHEBI:456216"/>
        <dbReference type="EC" id="2.7.1.188"/>
    </reaction>
</comment>
<comment type="similarity">
    <text evidence="4">Belongs to the ROK (NagC/XylR) family.</text>
</comment>
<sequence length="359" mass="36943">MKRPPHHPVTVADVGGTHLRWARWSPDGGLGEVHTTPSPGHARRPGAGAADLQAELIRELASRVEPGARAGVSLGAAMDHHSGTAYASAPLWGPQVSPFDVPAALRAARPDVHWTVVNDVTAGLLHLAEMVRDAGVRKACLVTISTGIACRTMDLRTGGIPVDAAGLQGEIGHLPATVLADGVPVVTRCDCGEPGHVAASSSGPGIRRVAAVLARRDPATWAGSGPTTRMMAGSGFEDAFRAALDDGDPVAADLLTAVTAPIADLLRTALCLDPELDLIALTGGVAHGLEPHYSAAVHDHLRRRGLYLTSEREPDWLTGRIRVVPPATADPLVGAGLAALAAGPVPAYSGGGREALVGR</sequence>
<dbReference type="EC" id="2.7.1.188" evidence="2"/>
<dbReference type="EMBL" id="Y18523">
    <property type="protein sequence ID" value="CAD29482.2"/>
    <property type="molecule type" value="Genomic_DNA"/>
</dbReference>
<dbReference type="EMBL" id="CP003170">
    <property type="protein sequence ID" value="AEV84571.1"/>
    <property type="molecule type" value="Genomic_DNA"/>
</dbReference>
<dbReference type="RefSeq" id="WP_014690643.1">
    <property type="nucleotide sequence ID" value="NC_017803.1"/>
</dbReference>
<dbReference type="SMR" id="Q8RIS8"/>
<dbReference type="STRING" id="134676.ACPL_3676"/>
<dbReference type="KEGG" id="ase:ACPL_3676"/>
<dbReference type="PATRIC" id="fig|134676.3.peg.3592"/>
<dbReference type="eggNOG" id="COG1940">
    <property type="taxonomic scope" value="Bacteria"/>
</dbReference>
<dbReference type="HOGENOM" id="CLU_075306_0_0_11"/>
<dbReference type="OrthoDB" id="3464494at2"/>
<dbReference type="BRENDA" id="2.7.1.188">
    <property type="organism ID" value="144"/>
</dbReference>
<dbReference type="Proteomes" id="UP000005440">
    <property type="component" value="Chromosome"/>
</dbReference>
<dbReference type="GO" id="GO:0016301">
    <property type="term" value="F:kinase activity"/>
    <property type="evidence" value="ECO:0007669"/>
    <property type="project" value="UniProtKB-KW"/>
</dbReference>
<dbReference type="Gene3D" id="3.30.420.40">
    <property type="match status" value="2"/>
</dbReference>
<dbReference type="InterPro" id="IPR043129">
    <property type="entry name" value="ATPase_NBD"/>
</dbReference>
<dbReference type="InterPro" id="IPR000600">
    <property type="entry name" value="ROK"/>
</dbReference>
<dbReference type="PANTHER" id="PTHR18964:SF149">
    <property type="entry name" value="BIFUNCTIONAL UDP-N-ACETYLGLUCOSAMINE 2-EPIMERASE_N-ACETYLMANNOSAMINE KINASE"/>
    <property type="match status" value="1"/>
</dbReference>
<dbReference type="PANTHER" id="PTHR18964">
    <property type="entry name" value="ROK (REPRESSOR, ORF, KINASE) FAMILY"/>
    <property type="match status" value="1"/>
</dbReference>
<dbReference type="Pfam" id="PF00480">
    <property type="entry name" value="ROK"/>
    <property type="match status" value="1"/>
</dbReference>
<dbReference type="SUPFAM" id="SSF53067">
    <property type="entry name" value="Actin-like ATPase domain"/>
    <property type="match status" value="1"/>
</dbReference>
<proteinExistence type="evidence at protein level"/>
<accession>Q8RIS8</accession>
<gene>
    <name evidence="3" type="primary">acbM</name>
    <name evidence="5" type="ordered locus">ACPL_3676</name>
</gene>
<evidence type="ECO:0000256" key="1">
    <source>
        <dbReference type="SAM" id="MobiDB-lite"/>
    </source>
</evidence>
<evidence type="ECO:0000269" key="2">
    <source>
    </source>
</evidence>
<evidence type="ECO:0000303" key="3">
    <source>
    </source>
</evidence>
<evidence type="ECO:0000305" key="4"/>
<evidence type="ECO:0000312" key="5">
    <source>
        <dbReference type="EMBL" id="AEV84571.1"/>
    </source>
</evidence>
<name>ACBM_ACTS5</name>
<organism>
    <name type="scientific">Actinoplanes sp. (strain ATCC 31044 / CBS 674.73 / SE50/110)</name>
    <dbReference type="NCBI Taxonomy" id="134676"/>
    <lineage>
        <taxon>Bacteria</taxon>
        <taxon>Bacillati</taxon>
        <taxon>Actinomycetota</taxon>
        <taxon>Actinomycetes</taxon>
        <taxon>Micromonosporales</taxon>
        <taxon>Micromonosporaceae</taxon>
        <taxon>Actinoplanes</taxon>
    </lineage>
</organism>
<protein>
    <recommendedName>
        <fullName evidence="4">2-epi-5-epi-valiolone 7-kinase</fullName>
        <ecNumber evidence="2">2.7.1.188</ecNumber>
    </recommendedName>
</protein>
<reference key="1">
    <citation type="journal article" date="2002" name="J. Biol. Chem.">
        <title>Biosynthesis of the C(7)-cyclitol moiety of acarbose in Actinoplanes species SE50/110. 7-O-phosphorylation of the initial cyclitol precursor leads to proposal of a new biosynthetic pathway.</title>
        <authorList>
            <person name="Zhang C.S."/>
            <person name="Stratmann A."/>
            <person name="Block O."/>
            <person name="Bruckner R."/>
            <person name="Podeschwa M."/>
            <person name="Altenbach H.J."/>
            <person name="Wehmeier U.F."/>
            <person name="Piepersberg W."/>
        </authorList>
    </citation>
    <scope>NUCLEOTIDE SEQUENCE [GENOMIC DNA]</scope>
    <scope>FUNCTION</scope>
    <scope>CATALYTIC ACTIVITY</scope>
    <source>
        <strain>ATCC 31044 / CBS 674.73 / SE50/110</strain>
    </source>
</reference>
<reference key="2">
    <citation type="submission" date="2011-12" db="EMBL/GenBank/DDBJ databases">
        <title>The complete genome sequence of the acarbose producer Actinoplanes sp. SE50/110.</title>
        <authorList>
            <person name="Schwientek P."/>
            <person name="Szczepanowski R."/>
            <person name="Kalinowski J."/>
            <person name="Klein A."/>
            <person name="Selber K."/>
            <person name="Wehmeier U.F."/>
            <person name="Stoye J."/>
            <person name="Puehler A."/>
        </authorList>
    </citation>
    <scope>NUCLEOTIDE SEQUENCE [LARGE SCALE GENOMIC DNA]</scope>
    <source>
        <strain>ATCC 31044 / CBS 674.73 / SE50/110</strain>
    </source>
</reference>
<feature type="chain" id="PRO_0000435391" description="2-epi-5-epi-valiolone 7-kinase">
    <location>
        <begin position="1"/>
        <end position="359"/>
    </location>
</feature>
<feature type="region of interest" description="Disordered" evidence="1">
    <location>
        <begin position="28"/>
        <end position="48"/>
    </location>
</feature>